<evidence type="ECO:0000250" key="1"/>
<evidence type="ECO:0000256" key="2">
    <source>
        <dbReference type="SAM" id="MobiDB-lite"/>
    </source>
</evidence>
<evidence type="ECO:0000305" key="3"/>
<organism>
    <name type="scientific">Dasycercus cristicauda</name>
    <name type="common">Crest-tailed mulgara</name>
    <dbReference type="NCBI Taxonomy" id="32542"/>
    <lineage>
        <taxon>Eukaryota</taxon>
        <taxon>Metazoa</taxon>
        <taxon>Chordata</taxon>
        <taxon>Craniata</taxon>
        <taxon>Vertebrata</taxon>
        <taxon>Euteleostomi</taxon>
        <taxon>Mammalia</taxon>
        <taxon>Metatheria</taxon>
        <taxon>Dasyuromorphia</taxon>
        <taxon>Dasyuridae</taxon>
        <taxon>Dasycercus</taxon>
    </lineage>
</organism>
<accession>Q71VG8</accession>
<reference key="1">
    <citation type="journal article" date="1997" name="J. Mammal. Evol.">
        <title>Reconstructing the taxonomic radiation of dasyurine marsupials with cytochrome b, 12S rRNA, and protamine P1 gene trees.</title>
        <authorList>
            <person name="Krajewski C."/>
            <person name="Young J."/>
            <person name="Buckley L."/>
            <person name="Woolley P.A."/>
            <person name="Westerman M."/>
        </authorList>
    </citation>
    <scope>NUCLEOTIDE SEQUENCE [GENOMIC DNA]</scope>
</reference>
<sequence length="63" mass="8697">MARYRRHSRSRSRSRYRRRRRRRSRHHNRRRTYRRSRRHSRRRRGRRRGYSRRRYSRRGRRRY</sequence>
<feature type="chain" id="PRO_0000191461" description="Sperm protamine P1">
    <location>
        <begin position="1"/>
        <end position="63"/>
    </location>
</feature>
<feature type="region of interest" description="Disordered" evidence="2">
    <location>
        <begin position="1"/>
        <end position="63"/>
    </location>
</feature>
<protein>
    <recommendedName>
        <fullName>Sperm protamine P1</fullName>
    </recommendedName>
</protein>
<comment type="function">
    <text evidence="1">Protamines substitute for histones in the chromatin of sperm during the haploid phase of spermatogenesis. They compact sperm DNA into a highly condensed, stable and inactive complex (By similarity).</text>
</comment>
<comment type="subcellular location">
    <subcellularLocation>
        <location evidence="1">Nucleus</location>
    </subcellularLocation>
    <subcellularLocation>
        <location evidence="1">Chromosome</location>
    </subcellularLocation>
</comment>
<comment type="tissue specificity">
    <text>Testis.</text>
</comment>
<comment type="similarity">
    <text evidence="3">Belongs to the protamine P1 family.</text>
</comment>
<keyword id="KW-0158">Chromosome</keyword>
<keyword id="KW-0217">Developmental protein</keyword>
<keyword id="KW-0221">Differentiation</keyword>
<keyword id="KW-0226">DNA condensation</keyword>
<keyword id="KW-0238">DNA-binding</keyword>
<keyword id="KW-0544">Nucleosome core</keyword>
<keyword id="KW-0539">Nucleus</keyword>
<keyword id="KW-0744">Spermatogenesis</keyword>
<dbReference type="EMBL" id="AF010270">
    <property type="protein sequence ID" value="AAB69300.1"/>
    <property type="molecule type" value="Genomic_DNA"/>
</dbReference>
<dbReference type="GO" id="GO:0000786">
    <property type="term" value="C:nucleosome"/>
    <property type="evidence" value="ECO:0007669"/>
    <property type="project" value="UniProtKB-KW"/>
</dbReference>
<dbReference type="GO" id="GO:0005634">
    <property type="term" value="C:nucleus"/>
    <property type="evidence" value="ECO:0007669"/>
    <property type="project" value="UniProtKB-SubCell"/>
</dbReference>
<dbReference type="GO" id="GO:0003677">
    <property type="term" value="F:DNA binding"/>
    <property type="evidence" value="ECO:0007669"/>
    <property type="project" value="UniProtKB-KW"/>
</dbReference>
<dbReference type="GO" id="GO:0030261">
    <property type="term" value="P:chromosome condensation"/>
    <property type="evidence" value="ECO:0007669"/>
    <property type="project" value="UniProtKB-KW"/>
</dbReference>
<dbReference type="GO" id="GO:0035092">
    <property type="term" value="P:sperm DNA condensation"/>
    <property type="evidence" value="ECO:0007669"/>
    <property type="project" value="InterPro"/>
</dbReference>
<dbReference type="InterPro" id="IPR000221">
    <property type="entry name" value="Protamine_P1"/>
</dbReference>
<dbReference type="PROSITE" id="PS00048">
    <property type="entry name" value="PROTAMINE_P1"/>
    <property type="match status" value="1"/>
</dbReference>
<name>HSP1_DASCR</name>
<gene>
    <name type="primary">PRM1</name>
</gene>
<proteinExistence type="evidence at transcript level"/>